<organism>
    <name type="scientific">Rickettsia felis (strain ATCC VR-1525 / URRWXCal2)</name>
    <name type="common">Rickettsia azadi</name>
    <dbReference type="NCBI Taxonomy" id="315456"/>
    <lineage>
        <taxon>Bacteria</taxon>
        <taxon>Pseudomonadati</taxon>
        <taxon>Pseudomonadota</taxon>
        <taxon>Alphaproteobacteria</taxon>
        <taxon>Rickettsiales</taxon>
        <taxon>Rickettsiaceae</taxon>
        <taxon>Rickettsieae</taxon>
        <taxon>Rickettsia</taxon>
        <taxon>spotted fever group</taxon>
    </lineage>
</organism>
<comment type="subcellular location">
    <subcellularLocation>
        <location evidence="1">Cell outer membrane</location>
    </subcellularLocation>
</comment>
<protein>
    <recommendedName>
        <fullName>Putative surface cell antigen sca2</fullName>
    </recommendedName>
</protein>
<reference key="1">
    <citation type="journal article" date="2005" name="Ann. N. Y. Acad. Sci.">
        <title>Phylogenetic study of Rickettsia species using sequences of the autotransporter protein-encoding gene sca2.</title>
        <authorList>
            <person name="Ngwamidiba M."/>
            <person name="Blanc G."/>
            <person name="Ogata H."/>
            <person name="Raoult D."/>
            <person name="Fournier P.-E."/>
        </authorList>
    </citation>
    <scope>NUCLEOTIDE SEQUENCE [GENOMIC DNA]</scope>
</reference>
<reference key="2">
    <citation type="journal article" date="2005" name="PLoS Biol.">
        <title>The genome sequence of Rickettsia felis identifies the first putative conjugative plasmid in an obligate intracellular parasite.</title>
        <authorList>
            <person name="Ogata H."/>
            <person name="Renesto P."/>
            <person name="Audic S."/>
            <person name="Robert C."/>
            <person name="Blanc G."/>
            <person name="Fournier P.-E."/>
            <person name="Parinello H."/>
            <person name="Claverie J.-M."/>
            <person name="Raoult D."/>
        </authorList>
    </citation>
    <scope>NUCLEOTIDE SEQUENCE [LARGE SCALE GENOMIC DNA]</scope>
    <source>
        <strain>ATCC VR-1525 / URRWXCal2</strain>
    </source>
</reference>
<accession>Q4UNE0</accession>
<name>SCA2_RICFE</name>
<evidence type="ECO:0000250" key="1"/>
<evidence type="ECO:0000255" key="2"/>
<evidence type="ECO:0000255" key="3">
    <source>
        <dbReference type="PROSITE-ProRule" id="PRU00556"/>
    </source>
</evidence>
<evidence type="ECO:0000256" key="4">
    <source>
        <dbReference type="SAM" id="MobiDB-lite"/>
    </source>
</evidence>
<keyword id="KW-0998">Cell outer membrane</keyword>
<keyword id="KW-0472">Membrane</keyword>
<keyword id="KW-0732">Signal</keyword>
<keyword id="KW-0812">Transmembrane</keyword>
<keyword id="KW-1134">Transmembrane beta strand</keyword>
<proteinExistence type="inferred from homology"/>
<dbReference type="EMBL" id="AY355374">
    <property type="protein sequence ID" value="AAT79539.1"/>
    <property type="molecule type" value="Genomic_DNA"/>
</dbReference>
<dbReference type="EMBL" id="CP000053">
    <property type="protein sequence ID" value="AAY60918.1"/>
    <property type="molecule type" value="Genomic_DNA"/>
</dbReference>
<dbReference type="SMR" id="Q4UNE0"/>
<dbReference type="STRING" id="315456.RF_0067"/>
<dbReference type="KEGG" id="rfe:RF_0067"/>
<dbReference type="eggNOG" id="COG2188">
    <property type="taxonomic scope" value="Bacteria"/>
</dbReference>
<dbReference type="eggNOG" id="COG3468">
    <property type="taxonomic scope" value="Bacteria"/>
</dbReference>
<dbReference type="HOGENOM" id="CLU_238220_0_0_5"/>
<dbReference type="OrthoDB" id="7161046at2"/>
<dbReference type="Proteomes" id="UP000008548">
    <property type="component" value="Chromosome"/>
</dbReference>
<dbReference type="GO" id="GO:0009279">
    <property type="term" value="C:cell outer membrane"/>
    <property type="evidence" value="ECO:0007669"/>
    <property type="project" value="UniProtKB-SubCell"/>
</dbReference>
<dbReference type="Gene3D" id="2.40.128.130">
    <property type="entry name" value="Autotransporter beta-domain"/>
    <property type="match status" value="1"/>
</dbReference>
<dbReference type="InterPro" id="IPR005546">
    <property type="entry name" value="Autotransporte_beta"/>
</dbReference>
<dbReference type="InterPro" id="IPR036709">
    <property type="entry name" value="Autotransporte_beta_dom_sf"/>
</dbReference>
<dbReference type="InterPro" id="IPR006315">
    <property type="entry name" value="OM_autotransptr_brl_dom"/>
</dbReference>
<dbReference type="InterPro" id="IPR054014">
    <property type="entry name" value="Sca2"/>
</dbReference>
<dbReference type="NCBIfam" id="TIGR01414">
    <property type="entry name" value="autotrans_barl"/>
    <property type="match status" value="1"/>
</dbReference>
<dbReference type="Pfam" id="PF03797">
    <property type="entry name" value="Autotransporter"/>
    <property type="match status" value="1"/>
</dbReference>
<dbReference type="Pfam" id="PF22203">
    <property type="entry name" value="Sca2"/>
    <property type="match status" value="2"/>
</dbReference>
<dbReference type="SMART" id="SM00869">
    <property type="entry name" value="Autotransporter"/>
    <property type="match status" value="1"/>
</dbReference>
<dbReference type="SUPFAM" id="SSF103515">
    <property type="entry name" value="Autotransporter"/>
    <property type="match status" value="1"/>
</dbReference>
<dbReference type="PROSITE" id="PS51208">
    <property type="entry name" value="AUTOTRANSPORTER"/>
    <property type="match status" value="1"/>
</dbReference>
<sequence>MSLQNSHSKKYVLTFFMSTCLLTSSFLSTSARAASFTQLANQIPTLSGLSEVQRKQKWNSYTLQEKQEAWRRAKLTPDFVQAMIDMQTGFTESDLSSRNNKTRHKAREKKSELDLYIAGTKQGFKEKVDGYISQGKIPTPEEAAQNLEIDYDAKKTDNKLEKNQNVRRVEKDKKALLDLYIHSITTSVKEKEYITTGQVPELGELEKALNISKEEAKHRRTIIRDQVMANERPKLVRSGTVLTKKELHKRFGKDTTTDDTKYIDDITTEVMYTKKQGYVNTDFLPKISEIMNEFKVDKGRANLYLNQIKAGIEAKLLADNNQTTTKPFTKHSRTTTNTAGISSGVPFDTGRTKPETKSFDFKRSMYSLLNRKQEDQLSKTEQHLKQQIKLEENKEEFKEILTKNPIDALLFAEQSNLGNSFKQEAISNIDLSKDISRILFTVDDKGNRTILNTILTTTPEHKDELIKQAQHHAIQTLPTSISDKDVSDKKKLTLATLAATEDKKVLEEALDNWLSTNGYKRKPEVESLISILLSDETTLKAGIDKIFELPVENNVNNNSNKGQNGTPILPPTPPLNGSMPPSPPPPLLNGTPTSTAFNNSNPNHKFDLKNFEATYPRLYKSYNEFIQNTTSASQSQATTTSNNIPDTKAKMGESLELLKQKVAKQNEVIGLIHNEVTKLYNFSPKTFVNLFNTENEEIIKKIEQIAKREDIQKILQDNDIKITSTFVSKIFNESLEQTKQRLRSSNIINAKQYKRIEQYANKQECVTEFLRITNPLEQLKFANKYINILGQSTFNGKLNELIENPNKLTFSQKINFVLQGYQELTREIPTAKANLNKLKQNILEKIEIQQLIANKDISRKDLLDILNNKNPELLKSLLEAKVILEENKLNNSANEVDLKEIIPSLNYLTSEQLTSLINRITIEGVKTALKAKWQQENKTVSNNTEKPLIYNNGTPMPPPIPNGNSNFGTNDYLISMGYTQEFIDRMDKVKPNNNFGKNHNYTATDFKSNVGKNYYESTSKLGGTDILLTDSQKLENAIKKEVLAKYIEEPNRDMQDDSLLKQAFEEKFYYAEDKNTKVIPKPSEVNFDPNFIGPRTEVGQEIYELYEQELLKLARDPVFIEYVKNNNNTQKDERELLISFIEQIESKRPELEQKYGSDVQSEDNNQEKKVGHLNMKQFQSLFQQENESANDESSTKDDPQPEDSNKKSEKSDSETALSPRLLSSNDSKNDKSSDDKKSLLVLRSSEEESKKDIALESEDEAIDMSFKTEAIAEQDEATQRQQVSDDTNRKVAILVKATSTLHKPVHYNILSDRLKVAAIGAGDEEASINRGVWISGLYGINKQGTWKNIPKYQGRTTGVTIGADAEFINSHDVIGIAYSRLEFQIKYNKKLEKTAVNGHLLSIYGLKELIKGFSLQAITSYGHNYIKNKSKSINNIIGKYQNNNLSFQTLLNYKYRTKYDLHFIPNIGFKYDYSRASNYKEYNVDIENLMNQKKSNQSFESSIGGKIVFKPIATVNNIILTPSLYGNIERHFNNKNTKVNAKATFKGQTLQETIIIPKQPKLGYNIGSNILMSKKNINVLLEYNYYTHRKYQSHQGLIKLKVNL</sequence>
<feature type="signal peptide" evidence="2">
    <location>
        <begin position="1"/>
        <end position="33"/>
    </location>
</feature>
<feature type="chain" id="PRO_0000262570" description="Putative surface cell antigen sca2">
    <location>
        <begin position="34"/>
        <end position="1604"/>
    </location>
</feature>
<feature type="domain" description="Autotransporter" evidence="3">
    <location>
        <begin position="1325"/>
        <end position="1604"/>
    </location>
</feature>
<feature type="region of interest" description="Disordered" evidence="4">
    <location>
        <begin position="324"/>
        <end position="354"/>
    </location>
</feature>
<feature type="region of interest" description="Disordered" evidence="4">
    <location>
        <begin position="554"/>
        <end position="603"/>
    </location>
</feature>
<feature type="region of interest" description="Disordered" evidence="4">
    <location>
        <begin position="1183"/>
        <end position="1240"/>
    </location>
</feature>
<feature type="compositionally biased region" description="Low complexity" evidence="4">
    <location>
        <begin position="554"/>
        <end position="564"/>
    </location>
</feature>
<feature type="compositionally biased region" description="Pro residues" evidence="4">
    <location>
        <begin position="568"/>
        <end position="587"/>
    </location>
</feature>
<feature type="compositionally biased region" description="Basic and acidic residues" evidence="4">
    <location>
        <begin position="1193"/>
        <end position="1213"/>
    </location>
</feature>
<feature type="compositionally biased region" description="Basic and acidic residues" evidence="4">
    <location>
        <begin position="1227"/>
        <end position="1240"/>
    </location>
</feature>
<gene>
    <name type="primary">sca2</name>
    <name type="ordered locus">RF_0067</name>
</gene>